<sequence length="205" mass="23182">MKAGIDEAGKGCVIGPLVVAGVACSDEDRLRKLGVKDSKKLSQGRREELAEEIRKICRTEVLKVSPENLDERMAAKTINEILKECYAEIILRLKPEIAYVDSPDVIPERLSRELEEITGLRVVAEHKADEKYPLVAAASIIAKVEREREIERLKEKFGDFGSGYASDPRTREVLKEWIASGRIPSCVRMRWKTVSNLRQKTLDDF</sequence>
<accession>O29634</accession>
<feature type="chain" id="PRO_0000111661" description="Ribonuclease HII">
    <location>
        <begin position="1"/>
        <end position="205"/>
    </location>
</feature>
<feature type="domain" description="RNase H type-2" evidence="2">
    <location>
        <begin position="1"/>
        <end position="203"/>
    </location>
</feature>
<feature type="binding site">
    <location>
        <position position="6"/>
    </location>
    <ligand>
        <name>a divalent metal cation</name>
        <dbReference type="ChEBI" id="CHEBI:60240"/>
    </ligand>
</feature>
<feature type="binding site">
    <location>
        <position position="7"/>
    </location>
    <ligand>
        <name>a divalent metal cation</name>
        <dbReference type="ChEBI" id="CHEBI:60240"/>
    </ligand>
</feature>
<feature type="binding site" evidence="5">
    <location>
        <position position="46"/>
    </location>
    <ligand>
        <name>substrate</name>
    </ligand>
</feature>
<feature type="binding site">
    <location>
        <position position="101"/>
    </location>
    <ligand>
        <name>a divalent metal cation</name>
        <dbReference type="ChEBI" id="CHEBI:60240"/>
    </ligand>
</feature>
<feature type="binding site" evidence="5">
    <location>
        <position position="143"/>
    </location>
    <ligand>
        <name>substrate</name>
    </ligand>
</feature>
<feature type="binding site" evidence="5">
    <location>
        <position position="146"/>
    </location>
    <ligand>
        <name>substrate</name>
    </ligand>
</feature>
<feature type="binding site" evidence="5">
    <location>
        <position position="164"/>
    </location>
    <ligand>
        <name>substrate</name>
    </ligand>
</feature>
<feature type="mutagenesis site" description="Loss of activity." evidence="3">
    <original>D</original>
    <variation>N</variation>
    <location>
        <position position="6"/>
    </location>
</feature>
<feature type="mutagenesis site" description="Slight decrease of activity." evidence="3">
    <original>E</original>
    <variation>N</variation>
    <location>
        <position position="7"/>
    </location>
</feature>
<feature type="mutagenesis site" description="Loss of activity." evidence="3">
    <original>E</original>
    <variation>Q</variation>
    <location>
        <position position="7"/>
    </location>
</feature>
<feature type="mutagenesis site" description="Increases Km for RNA 60-fold." evidence="3">
    <original>R</original>
    <variation>A</variation>
    <location>
        <position position="46"/>
    </location>
</feature>
<feature type="mutagenesis site" description="Loss of activity." evidence="3">
    <original>D</original>
    <variation>N</variation>
    <location>
        <position position="101"/>
    </location>
</feature>
<feature type="mutagenesis site" description="Lowers activity by 50%." evidence="3">
    <original>D</original>
    <variation>N</variation>
    <location>
        <position position="129"/>
    </location>
</feature>
<feature type="mutagenesis site" description="Decrease of activity. Increases Km for RNA 30-fold." evidence="3">
    <original>K</original>
    <variation>A</variation>
    <location>
        <position position="143"/>
    </location>
</feature>
<feature type="mutagenesis site" description="Decrease of activity. Increases Km for RNA 26-fold." evidence="3">
    <original>R</original>
    <variation>A</variation>
    <location>
        <position position="146"/>
    </location>
</feature>
<feature type="mutagenesis site" description="Loss of activity. Increases Km for RNA 44-fold." evidence="3">
    <original>Y</original>
    <variation>A</variation>
    <location>
        <position position="164"/>
    </location>
</feature>
<feature type="strand" evidence="6">
    <location>
        <begin position="2"/>
        <end position="8"/>
    </location>
</feature>
<feature type="strand" evidence="6">
    <location>
        <begin position="13"/>
        <end position="15"/>
    </location>
</feature>
<feature type="strand" evidence="6">
    <location>
        <begin position="17"/>
        <end position="25"/>
    </location>
</feature>
<feature type="helix" evidence="6">
    <location>
        <begin position="27"/>
        <end position="32"/>
    </location>
</feature>
<feature type="helix" evidence="7">
    <location>
        <begin position="35"/>
        <end position="40"/>
    </location>
</feature>
<feature type="helix" evidence="6">
    <location>
        <begin position="43"/>
        <end position="56"/>
    </location>
</feature>
<feature type="strand" evidence="6">
    <location>
        <begin position="57"/>
        <end position="64"/>
    </location>
</feature>
<feature type="helix" evidence="6">
    <location>
        <begin position="66"/>
        <end position="72"/>
    </location>
</feature>
<feature type="turn" evidence="6">
    <location>
        <begin position="73"/>
        <end position="75"/>
    </location>
</feature>
<feature type="helix" evidence="6">
    <location>
        <begin position="78"/>
        <end position="93"/>
    </location>
</feature>
<feature type="strand" evidence="6">
    <location>
        <begin position="96"/>
        <end position="105"/>
    </location>
</feature>
<feature type="helix" evidence="6">
    <location>
        <begin position="108"/>
        <end position="118"/>
    </location>
</feature>
<feature type="strand" evidence="6">
    <location>
        <begin position="120"/>
        <end position="127"/>
    </location>
</feature>
<feature type="helix" evidence="6">
    <location>
        <begin position="128"/>
        <end position="130"/>
    </location>
</feature>
<feature type="helix" evidence="6">
    <location>
        <begin position="133"/>
        <end position="157"/>
    </location>
</feature>
<feature type="strand" evidence="6">
    <location>
        <begin position="162"/>
        <end position="164"/>
    </location>
</feature>
<feature type="helix" evidence="6">
    <location>
        <begin position="168"/>
        <end position="180"/>
    </location>
</feature>
<feature type="helix" evidence="6">
    <location>
        <begin position="192"/>
        <end position="198"/>
    </location>
</feature>
<feature type="helix" evidence="8">
    <location>
        <begin position="202"/>
        <end position="204"/>
    </location>
</feature>
<protein>
    <recommendedName>
        <fullName>Ribonuclease HII</fullName>
        <shortName>RNase HII</shortName>
        <ecNumber>3.1.26.4</ecNumber>
    </recommendedName>
</protein>
<proteinExistence type="evidence at protein level"/>
<reference key="1">
    <citation type="journal article" date="1997" name="Nature">
        <title>The complete genome sequence of the hyperthermophilic, sulphate-reducing archaeon Archaeoglobus fulgidus.</title>
        <authorList>
            <person name="Klenk H.-P."/>
            <person name="Clayton R.A."/>
            <person name="Tomb J.-F."/>
            <person name="White O."/>
            <person name="Nelson K.E."/>
            <person name="Ketchum K.A."/>
            <person name="Dodson R.J."/>
            <person name="Gwinn M.L."/>
            <person name="Hickey E.K."/>
            <person name="Peterson J.D."/>
            <person name="Richardson D.L."/>
            <person name="Kerlavage A.R."/>
            <person name="Graham D.E."/>
            <person name="Kyrpides N.C."/>
            <person name="Fleischmann R.D."/>
            <person name="Quackenbush J."/>
            <person name="Lee N.H."/>
            <person name="Sutton G.G."/>
            <person name="Gill S.R."/>
            <person name="Kirkness E.F."/>
            <person name="Dougherty B.A."/>
            <person name="McKenney K."/>
            <person name="Adams M.D."/>
            <person name="Loftus B.J."/>
            <person name="Peterson S.N."/>
            <person name="Reich C.I."/>
            <person name="McNeil L.K."/>
            <person name="Badger J.H."/>
            <person name="Glodek A."/>
            <person name="Zhou L."/>
            <person name="Overbeek R."/>
            <person name="Gocayne J.D."/>
            <person name="Weidman J.F."/>
            <person name="McDonald L.A."/>
            <person name="Utterback T.R."/>
            <person name="Cotton M.D."/>
            <person name="Spriggs T."/>
            <person name="Artiach P."/>
            <person name="Kaine B.P."/>
            <person name="Sykes S.M."/>
            <person name="Sadow P.W."/>
            <person name="D'Andrea K.P."/>
            <person name="Bowman C."/>
            <person name="Fujii C."/>
            <person name="Garland S.A."/>
            <person name="Mason T.M."/>
            <person name="Olsen G.J."/>
            <person name="Fraser C.M."/>
            <person name="Smith H.O."/>
            <person name="Woese C.R."/>
            <person name="Venter J.C."/>
        </authorList>
    </citation>
    <scope>NUCLEOTIDE SEQUENCE [LARGE SCALE GENOMIC DNA]</scope>
    <source>
        <strain>ATCC 49558 / DSM 4304 / JCM 9628 / NBRC 100126 / VC-16</strain>
    </source>
</reference>
<reference key="2">
    <citation type="journal article" date="2001" name="Biochem. Biophys. Res. Commun.">
        <title>Archaeoglobus fulgidus RNase HII in DNA replication: enzymological functions and activity regulation via metal cofactors.</title>
        <authorList>
            <person name="Chai Q."/>
            <person name="Qiu J."/>
            <person name="Chapados B.R."/>
            <person name="Shen B."/>
        </authorList>
    </citation>
    <scope>COFACTOR</scope>
    <scope>MUTAGENESIS</scope>
</reference>
<reference key="3">
    <citation type="journal article" date="2001" name="J. Mol. Biol.">
        <title>Structural biochemistry of a type 2 RNase H: RNA primer recognition and removal during DNA replication.</title>
        <authorList>
            <person name="Chapados B.R."/>
            <person name="Chai Q."/>
            <person name="Hosfield D.J."/>
            <person name="Qiu J."/>
            <person name="Shen B."/>
            <person name="Tainer J.A."/>
        </authorList>
    </citation>
    <scope>X-RAY CRYSTALLOGRAPHY (1.95 ANGSTROMS) IN COMPLEX WITH DIVALENT METAL IONS</scope>
    <scope>MUTAGENESIS OF ASP-6; GLU-7; ARG-46; ASP-101; ASP-129; LYS-143; ARG-146 AND TYR-164</scope>
</reference>
<dbReference type="EC" id="3.1.26.4"/>
<dbReference type="EMBL" id="AE000782">
    <property type="protein sequence ID" value="AAB90620.1"/>
    <property type="molecule type" value="Genomic_DNA"/>
</dbReference>
<dbReference type="PIR" id="E69327">
    <property type="entry name" value="E69327"/>
</dbReference>
<dbReference type="RefSeq" id="WP_010878125.1">
    <property type="nucleotide sequence ID" value="NC_000917.1"/>
</dbReference>
<dbReference type="PDB" id="1I39">
    <property type="method" value="X-ray"/>
    <property type="resolution" value="1.95 A"/>
    <property type="chains" value="A=1-205"/>
</dbReference>
<dbReference type="PDB" id="1I3A">
    <property type="method" value="X-ray"/>
    <property type="resolution" value="2.15 A"/>
    <property type="chains" value="A=1-205"/>
</dbReference>
<dbReference type="PDB" id="3P83">
    <property type="method" value="X-ray"/>
    <property type="resolution" value="3.05 A"/>
    <property type="chains" value="D/E/F=1-205"/>
</dbReference>
<dbReference type="PDBsum" id="1I39"/>
<dbReference type="PDBsum" id="1I3A"/>
<dbReference type="PDBsum" id="3P83"/>
<dbReference type="SMR" id="O29634"/>
<dbReference type="STRING" id="224325.AF_0621"/>
<dbReference type="PaxDb" id="224325-AF_0621"/>
<dbReference type="EnsemblBacteria" id="AAB90620">
    <property type="protein sequence ID" value="AAB90620"/>
    <property type="gene ID" value="AF_0621"/>
</dbReference>
<dbReference type="GeneID" id="24794224"/>
<dbReference type="KEGG" id="afu:AF_0621"/>
<dbReference type="eggNOG" id="arCOG04121">
    <property type="taxonomic scope" value="Archaea"/>
</dbReference>
<dbReference type="HOGENOM" id="CLU_036532_0_4_2"/>
<dbReference type="OrthoDB" id="33866at2157"/>
<dbReference type="PhylomeDB" id="O29634"/>
<dbReference type="BRENDA" id="3.1.26.4">
    <property type="organism ID" value="414"/>
</dbReference>
<dbReference type="EvolutionaryTrace" id="O29634"/>
<dbReference type="Proteomes" id="UP000002199">
    <property type="component" value="Chromosome"/>
</dbReference>
<dbReference type="GO" id="GO:0005737">
    <property type="term" value="C:cytoplasm"/>
    <property type="evidence" value="ECO:0007669"/>
    <property type="project" value="UniProtKB-SubCell"/>
</dbReference>
<dbReference type="GO" id="GO:0032299">
    <property type="term" value="C:ribonuclease H2 complex"/>
    <property type="evidence" value="ECO:0007669"/>
    <property type="project" value="TreeGrafter"/>
</dbReference>
<dbReference type="GO" id="GO:0030145">
    <property type="term" value="F:manganese ion binding"/>
    <property type="evidence" value="ECO:0007669"/>
    <property type="project" value="UniProtKB-UniRule"/>
</dbReference>
<dbReference type="GO" id="GO:0003723">
    <property type="term" value="F:RNA binding"/>
    <property type="evidence" value="ECO:0007669"/>
    <property type="project" value="InterPro"/>
</dbReference>
<dbReference type="GO" id="GO:0004523">
    <property type="term" value="F:RNA-DNA hybrid ribonuclease activity"/>
    <property type="evidence" value="ECO:0007669"/>
    <property type="project" value="UniProtKB-UniRule"/>
</dbReference>
<dbReference type="GO" id="GO:0043137">
    <property type="term" value="P:DNA replication, removal of RNA primer"/>
    <property type="evidence" value="ECO:0007669"/>
    <property type="project" value="TreeGrafter"/>
</dbReference>
<dbReference type="GO" id="GO:0006298">
    <property type="term" value="P:mismatch repair"/>
    <property type="evidence" value="ECO:0007669"/>
    <property type="project" value="TreeGrafter"/>
</dbReference>
<dbReference type="CDD" id="cd07180">
    <property type="entry name" value="RNase_HII_archaea_like"/>
    <property type="match status" value="1"/>
</dbReference>
<dbReference type="Gene3D" id="3.30.420.10">
    <property type="entry name" value="Ribonuclease H-like superfamily/Ribonuclease H"/>
    <property type="match status" value="1"/>
</dbReference>
<dbReference type="Gene3D" id="1.10.10.460">
    <property type="entry name" value="Ribonuclease hii. Domain 2"/>
    <property type="match status" value="1"/>
</dbReference>
<dbReference type="HAMAP" id="MF_00052_A">
    <property type="entry name" value="RNase_HII_A"/>
    <property type="match status" value="1"/>
</dbReference>
<dbReference type="IDEAL" id="IID90025"/>
<dbReference type="InterPro" id="IPR004649">
    <property type="entry name" value="RNase_H2_suA"/>
</dbReference>
<dbReference type="InterPro" id="IPR001352">
    <property type="entry name" value="RNase_HII/HIII"/>
</dbReference>
<dbReference type="InterPro" id="IPR024567">
    <property type="entry name" value="RNase_HII/HIII_dom"/>
</dbReference>
<dbReference type="InterPro" id="IPR020787">
    <property type="entry name" value="RNase_HII_arc"/>
</dbReference>
<dbReference type="InterPro" id="IPR023160">
    <property type="entry name" value="RNase_HII_hlx-loop-hlx_cap_dom"/>
</dbReference>
<dbReference type="InterPro" id="IPR012337">
    <property type="entry name" value="RNaseH-like_sf"/>
</dbReference>
<dbReference type="InterPro" id="IPR036397">
    <property type="entry name" value="RNaseH_sf"/>
</dbReference>
<dbReference type="NCBIfam" id="TIGR00729">
    <property type="entry name" value="ribonuclease HII"/>
    <property type="match status" value="1"/>
</dbReference>
<dbReference type="PANTHER" id="PTHR10954:SF23">
    <property type="entry name" value="RIBONUCLEASE"/>
    <property type="match status" value="1"/>
</dbReference>
<dbReference type="PANTHER" id="PTHR10954">
    <property type="entry name" value="RIBONUCLEASE H2 SUBUNIT A"/>
    <property type="match status" value="1"/>
</dbReference>
<dbReference type="Pfam" id="PF01351">
    <property type="entry name" value="RNase_HII"/>
    <property type="match status" value="1"/>
</dbReference>
<dbReference type="SUPFAM" id="SSF53098">
    <property type="entry name" value="Ribonuclease H-like"/>
    <property type="match status" value="1"/>
</dbReference>
<dbReference type="PROSITE" id="PS51975">
    <property type="entry name" value="RNASE_H_2"/>
    <property type="match status" value="1"/>
</dbReference>
<name>RNH2_ARCFU</name>
<keyword id="KW-0002">3D-structure</keyword>
<keyword id="KW-0963">Cytoplasm</keyword>
<keyword id="KW-0255">Endonuclease</keyword>
<keyword id="KW-0378">Hydrolase</keyword>
<keyword id="KW-0460">Magnesium</keyword>
<keyword id="KW-0464">Manganese</keyword>
<keyword id="KW-0479">Metal-binding</keyword>
<keyword id="KW-0540">Nuclease</keyword>
<keyword id="KW-1185">Reference proteome</keyword>
<evidence type="ECO:0000250" key="1"/>
<evidence type="ECO:0000255" key="2">
    <source>
        <dbReference type="PROSITE-ProRule" id="PRU01319"/>
    </source>
</evidence>
<evidence type="ECO:0000269" key="3">
    <source>
    </source>
</evidence>
<evidence type="ECO:0000269" key="4">
    <source>
    </source>
</evidence>
<evidence type="ECO:0000305" key="5"/>
<evidence type="ECO:0007829" key="6">
    <source>
        <dbReference type="PDB" id="1I39"/>
    </source>
</evidence>
<evidence type="ECO:0007829" key="7">
    <source>
        <dbReference type="PDB" id="1I3A"/>
    </source>
</evidence>
<evidence type="ECO:0007829" key="8">
    <source>
        <dbReference type="PDB" id="3P83"/>
    </source>
</evidence>
<organism>
    <name type="scientific">Archaeoglobus fulgidus (strain ATCC 49558 / DSM 4304 / JCM 9628 / NBRC 100126 / VC-16)</name>
    <dbReference type="NCBI Taxonomy" id="224325"/>
    <lineage>
        <taxon>Archaea</taxon>
        <taxon>Methanobacteriati</taxon>
        <taxon>Methanobacteriota</taxon>
        <taxon>Archaeoglobi</taxon>
        <taxon>Archaeoglobales</taxon>
        <taxon>Archaeoglobaceae</taxon>
        <taxon>Archaeoglobus</taxon>
    </lineage>
</organism>
<comment type="function">
    <text evidence="1">Endonuclease that specifically degrades the RNA of RNA-DNA hybrids.</text>
</comment>
<comment type="catalytic activity">
    <reaction>
        <text>Endonucleolytic cleavage to 5'-phosphomonoester.</text>
        <dbReference type="EC" id="3.1.26.4"/>
    </reaction>
</comment>
<comment type="cofactor">
    <cofactor evidence="4">
        <name>Mn(2+)</name>
        <dbReference type="ChEBI" id="CHEBI:29035"/>
    </cofactor>
    <cofactor evidence="4">
        <name>Mg(2+)</name>
        <dbReference type="ChEBI" id="CHEBI:18420"/>
    </cofactor>
    <text evidence="4">Manganese or magnesium. Binds 1 divalent metal ion per monomer in the absence of substrate. May bind a second metal ion after substrate binding.</text>
</comment>
<comment type="subcellular location">
    <subcellularLocation>
        <location evidence="5">Cytoplasm</location>
    </subcellularLocation>
</comment>
<comment type="similarity">
    <text evidence="5">Belongs to the RNase HII family.</text>
</comment>
<gene>
    <name type="primary">rnhB</name>
    <name type="ordered locus">AF_0621</name>
</gene>